<proteinExistence type="evidence at transcript level"/>
<name>TXF17_LYCSI</name>
<accession>B6DD50</accession>
<dbReference type="EMBL" id="EU926134">
    <property type="protein sequence ID" value="ACI41466.1"/>
    <property type="molecule type" value="mRNA"/>
</dbReference>
<dbReference type="EMBL" id="FM864138">
    <property type="protein sequence ID" value="CAS03735.1"/>
    <property type="molecule type" value="mRNA"/>
</dbReference>
<dbReference type="SMR" id="B6DD50"/>
<dbReference type="ArachnoServer" id="AS001073">
    <property type="toxin name" value="U15-lycotoxin-Ls1g"/>
</dbReference>
<dbReference type="GO" id="GO:0005576">
    <property type="term" value="C:extracellular region"/>
    <property type="evidence" value="ECO:0007669"/>
    <property type="project" value="UniProtKB-SubCell"/>
</dbReference>
<dbReference type="GO" id="GO:0090729">
    <property type="term" value="F:toxin activity"/>
    <property type="evidence" value="ECO:0007669"/>
    <property type="project" value="UniProtKB-KW"/>
</dbReference>
<dbReference type="GO" id="GO:0042742">
    <property type="term" value="P:defense response to bacterium"/>
    <property type="evidence" value="ECO:0007669"/>
    <property type="project" value="UniProtKB-KW"/>
</dbReference>
<dbReference type="InterPro" id="IPR036645">
    <property type="entry name" value="Elafin-like_sf"/>
</dbReference>
<dbReference type="SUPFAM" id="SSF57256">
    <property type="entry name" value="Elafin-like"/>
    <property type="match status" value="1"/>
</dbReference>
<feature type="signal peptide" evidence="2">
    <location>
        <begin position="1"/>
        <end position="20"/>
    </location>
</feature>
<feature type="chain" id="PRO_0000401893" description="U15-lycotoxin-Ls1g">
    <location>
        <begin position="21"/>
        <end position="86"/>
    </location>
</feature>
<feature type="domain" description="WAP">
    <location>
        <begin position="21"/>
        <end position="66"/>
    </location>
</feature>
<feature type="disulfide bond" evidence="1">
    <location>
        <begin position="24"/>
        <end position="54"/>
    </location>
</feature>
<feature type="disulfide bond" evidence="1">
    <location>
        <begin position="32"/>
        <end position="58"/>
    </location>
</feature>
<feature type="disulfide bond" evidence="1">
    <location>
        <begin position="41"/>
        <end position="53"/>
    </location>
</feature>
<feature type="disulfide bond" evidence="3">
    <location>
        <begin position="42"/>
        <end position="80"/>
    </location>
</feature>
<feature type="disulfide bond" evidence="1">
    <location>
        <begin position="47"/>
        <end position="62"/>
    </location>
</feature>
<organism>
    <name type="scientific">Lycosa singoriensis</name>
    <name type="common">Wolf spider</name>
    <name type="synonym">Aranea singoriensis</name>
    <dbReference type="NCBI Taxonomy" id="434756"/>
    <lineage>
        <taxon>Eukaryota</taxon>
        <taxon>Metazoa</taxon>
        <taxon>Ecdysozoa</taxon>
        <taxon>Arthropoda</taxon>
        <taxon>Chelicerata</taxon>
        <taxon>Arachnida</taxon>
        <taxon>Araneae</taxon>
        <taxon>Araneomorphae</taxon>
        <taxon>Entelegynae</taxon>
        <taxon>Lycosoidea</taxon>
        <taxon>Lycosidae</taxon>
        <taxon>Lycosa</taxon>
    </lineage>
</organism>
<reference key="1">
    <citation type="journal article" date="2010" name="Zoology">
        <title>Transcriptome analysis of the venom glands of the Chinese wolf spider Lycosa singoriensis.</title>
        <authorList>
            <person name="Zhang Y."/>
            <person name="Chen J."/>
            <person name="Tang X."/>
            <person name="Wang F."/>
            <person name="Jiang L."/>
            <person name="Xiong X."/>
            <person name="Wang M."/>
            <person name="Rong M."/>
            <person name="Liu Z."/>
            <person name="Liang S."/>
        </authorList>
    </citation>
    <scope>NUCLEOTIDE SEQUENCE [LARGE SCALE MRNA]</scope>
    <source>
        <tissue>Venom gland</tissue>
    </source>
</reference>
<comment type="function">
    <text evidence="1">Has antibacterial activity.</text>
</comment>
<comment type="subcellular location">
    <subcellularLocation>
        <location evidence="1">Secreted</location>
    </subcellularLocation>
</comment>
<comment type="tissue specificity">
    <text>Expressed by the venom gland.</text>
</comment>
<comment type="PTM">
    <text evidence="3">Contains 5 disulfide bonds.</text>
</comment>
<comment type="similarity">
    <text evidence="3">Belongs to the venom protein 11 family. 01 (wap-1) subfamily.</text>
</comment>
<keyword id="KW-0044">Antibiotic</keyword>
<keyword id="KW-0929">Antimicrobial</keyword>
<keyword id="KW-1015">Disulfide bond</keyword>
<keyword id="KW-0964">Secreted</keyword>
<keyword id="KW-0732">Signal</keyword>
<keyword id="KW-0800">Toxin</keyword>
<sequence>MNSKIFAVLLLLGLLSCVLSDQYCPKSSITACKKMNIRNDCCKDDDCTGGSWCCATPCGNFCKYPADRPGGKRAAGGKSCKTGYVY</sequence>
<evidence type="ECO:0000250" key="1"/>
<evidence type="ECO:0000255" key="2"/>
<evidence type="ECO:0000305" key="3"/>
<protein>
    <recommendedName>
        <fullName>U15-lycotoxin-Ls1g</fullName>
    </recommendedName>
    <alternativeName>
        <fullName>Toxin-like structure LSTX-N17</fullName>
    </alternativeName>
</protein>